<protein>
    <recommendedName>
        <fullName>Muconate cycloisomerase 1</fullName>
        <ecNumber evidence="1">5.5.1.1</ecNumber>
    </recommendedName>
    <alternativeName>
        <fullName>Cis,cis-muconate lactonizing enzyme I</fullName>
        <shortName>MLE</shortName>
    </alternativeName>
    <alternativeName>
        <fullName>Muconate cycloisomerase I</fullName>
    </alternativeName>
</protein>
<name>MLE_CUTCT</name>
<dbReference type="EC" id="5.5.1.1" evidence="1"/>
<dbReference type="EMBL" id="L26042">
    <property type="protein sequence ID" value="AAA21782.1"/>
    <property type="molecule type" value="mRNA"/>
</dbReference>
<dbReference type="SMR" id="P46057"/>
<dbReference type="UniPathway" id="UPA00157">
    <property type="reaction ID" value="UER00259"/>
</dbReference>
<dbReference type="GO" id="GO:0017057">
    <property type="term" value="F:6-phosphogluconolactonase activity"/>
    <property type="evidence" value="ECO:0007669"/>
    <property type="project" value="TreeGrafter"/>
</dbReference>
<dbReference type="GO" id="GO:0018849">
    <property type="term" value="F:muconate cycloisomerase activity"/>
    <property type="evidence" value="ECO:0007669"/>
    <property type="project" value="UniProtKB-EC"/>
</dbReference>
<dbReference type="GO" id="GO:0042952">
    <property type="term" value="P:beta-ketoadipate pathway"/>
    <property type="evidence" value="ECO:0007669"/>
    <property type="project" value="UniProtKB-UniPathway"/>
</dbReference>
<dbReference type="Gene3D" id="2.130.10.10">
    <property type="entry name" value="YVTN repeat-like/Quinoprotein amine dehydrogenase"/>
    <property type="match status" value="1"/>
</dbReference>
<dbReference type="InterPro" id="IPR050282">
    <property type="entry name" value="Cycloisomerase_2"/>
</dbReference>
<dbReference type="InterPro" id="IPR019405">
    <property type="entry name" value="Lactonase_7-beta_prop"/>
</dbReference>
<dbReference type="InterPro" id="IPR015943">
    <property type="entry name" value="WD40/YVTN_repeat-like_dom_sf"/>
</dbReference>
<dbReference type="PANTHER" id="PTHR30344">
    <property type="entry name" value="6-PHOSPHOGLUCONOLACTONASE-RELATED"/>
    <property type="match status" value="1"/>
</dbReference>
<dbReference type="PANTHER" id="PTHR30344:SF4">
    <property type="entry name" value="CYCLASE, PUTATIVE (AFU_ORTHOLOGUE AFUA_6G11580)-RELATED"/>
    <property type="match status" value="1"/>
</dbReference>
<dbReference type="Pfam" id="PF10282">
    <property type="entry name" value="Lactonase"/>
    <property type="match status" value="1"/>
</dbReference>
<dbReference type="SUPFAM" id="SSF75011">
    <property type="entry name" value="3-carboxy-cis,cis-mucoante lactonizing enzyme"/>
    <property type="match status" value="1"/>
</dbReference>
<accession>P46057</accession>
<keyword id="KW-0903">Direct protein sequencing</keyword>
<keyword id="KW-0413">Isomerase</keyword>
<sequence length="374" mass="41263">MAVAPTSYDILMGTFRSPYLYTLTFDVLARKLQVREVNEATGGHNWLDVSPDGNTLYATVWGEPPKLTSYDIVRGGEYATTKLSRNVASQYMSGYVCSNNKAMYSACGPQVDTFLVDDNGTLLDQPAVQSFNLLQGQEKNKANGTLDFGGLRHGGHSADLSPDGTKLYVADIGRNCVWMYHVDRETGLLTEASKNIATRPHDGPRHAWPHPNGRIVYSLQEHSSYVDAFRLTDDNKLEFLEGGCIIPDEKDHDKYWADEVRLSPMADVVFGSTRGLEEGTPGFVTAWNLRPDGTFASTEATHRFQTKTSGGWANAIAVCPNLGPNGEVFMTLTDSEVGFIQILAYTSDKGFEVVDELKISTEKEHIMPATTVWL</sequence>
<reference key="1">
    <citation type="journal article" date="1994" name="Biochemistry">
        <title>Cis,cis-muconate lactonizing enzyme from Trichosporon cutaneum: evidence for a novel class of cycloisomerases in eucaryotes.</title>
        <authorList>
            <person name="Mazur P."/>
            <person name="Pieken W.A."/>
            <person name="Budihas S.R."/>
            <person name="Williams S.E."/>
            <person name="Wong S."/>
            <person name="Kozarich J.W."/>
        </authorList>
    </citation>
    <scope>NUCLEOTIDE SEQUENCE [MRNA]</scope>
    <scope>PROTEIN SEQUENCE OF 2-42; 254-265 AND 363-372</scope>
    <source>
        <strain>ATCC 58094</strain>
    </source>
</reference>
<evidence type="ECO:0000250" key="1">
    <source>
        <dbReference type="UniProtKB" id="P08310"/>
    </source>
</evidence>
<evidence type="ECO:0000269" key="2">
    <source>
    </source>
</evidence>
<evidence type="ECO:0000305" key="3"/>
<comment type="function">
    <text>Catalyzes a syn cycloisomerization.</text>
</comment>
<comment type="catalytic activity">
    <reaction evidence="1">
        <text>(S)-muconolactone = cis,cis-muconate + H(+)</text>
        <dbReference type="Rhea" id="RHEA:30031"/>
        <dbReference type="ChEBI" id="CHEBI:15378"/>
        <dbReference type="ChEBI" id="CHEBI:32379"/>
        <dbReference type="ChEBI" id="CHEBI:58736"/>
        <dbReference type="EC" id="5.5.1.1"/>
    </reaction>
</comment>
<comment type="pathway">
    <text>Aromatic compound metabolism; beta-ketoadipate pathway; 5-oxo-4,5-dihydro-2-furylacetate from catechol: step 2/3.</text>
</comment>
<comment type="subunit">
    <text>Homotetramer.</text>
</comment>
<comment type="similarity">
    <text evidence="3">Belongs to the cycloisomerase 2 family.</text>
</comment>
<organism>
    <name type="scientific">Cutaneotrichosporon cutaneum</name>
    <name type="common">Yeast</name>
    <name type="synonym">Trichosporon cutaneum</name>
    <dbReference type="NCBI Taxonomy" id="5554"/>
    <lineage>
        <taxon>Eukaryota</taxon>
        <taxon>Fungi</taxon>
        <taxon>Dikarya</taxon>
        <taxon>Basidiomycota</taxon>
        <taxon>Agaricomycotina</taxon>
        <taxon>Tremellomycetes</taxon>
        <taxon>Trichosporonales</taxon>
        <taxon>Trichosporonaceae</taxon>
        <taxon>Cutaneotrichosporon</taxon>
    </lineage>
</organism>
<proteinExistence type="evidence at protein level"/>
<feature type="initiator methionine" description="Removed" evidence="2">
    <location>
        <position position="1"/>
    </location>
</feature>
<feature type="chain" id="PRO_0000171126" description="Muconate cycloisomerase 1">
    <location>
        <begin position="2"/>
        <end position="374"/>
    </location>
</feature>